<feature type="chain" id="PRO_0000339792" description="UPF0597 protein CLB_1903">
    <location>
        <begin position="1"/>
        <end position="430"/>
    </location>
</feature>
<protein>
    <recommendedName>
        <fullName evidence="1">UPF0597 protein CLB_1903</fullName>
    </recommendedName>
</protein>
<reference key="1">
    <citation type="journal article" date="2007" name="PLoS ONE">
        <title>Analysis of the neurotoxin complex genes in Clostridium botulinum A1-A4 and B1 strains: BoNT/A3, /Ba4 and /B1 clusters are located within plasmids.</title>
        <authorList>
            <person name="Smith T.J."/>
            <person name="Hill K.K."/>
            <person name="Foley B.T."/>
            <person name="Detter J.C."/>
            <person name="Munk A.C."/>
            <person name="Bruce D.C."/>
            <person name="Doggett N.A."/>
            <person name="Smith L.A."/>
            <person name="Marks J.D."/>
            <person name="Xie G."/>
            <person name="Brettin T.S."/>
        </authorList>
    </citation>
    <scope>NUCLEOTIDE SEQUENCE [LARGE SCALE GENOMIC DNA]</scope>
    <source>
        <strain>ATCC 19397 / Type A</strain>
    </source>
</reference>
<accession>A7FV20</accession>
<gene>
    <name type="ordered locus">CLB_1903</name>
</gene>
<name>Y1903_CLOB1</name>
<sequence length="430" mass="45994">MLTKENLLALLKQEVVPALGCTEPVCVALATADAYHAIGGRIVSIKIEVNPGIYKNGMSVGIPGFDRVGLKYAASLGAVIGNPEKKLELLEDITAEVSQKAIKIVENSQVVVVIKHEEAQLYVRAEIITTAGMGISEIRGTHSNIIFTKRNNDMLLQKEYSVDSDDSLHQQLKLMGIAEIRKLIDECKEEELSFLLDGVDMNERLADYGLEHSLGIGIASALQEKMTTDIMGDNLFSRTMLRVASSAEGRMSGCPYAVMSSAGSGNHGITAILPVTEMARYLNSSREQLVKALAFSHTLNVYIKLFTGKLSATCGCGVSAATAASAAMVWLMGGNEHQIANAIINMSGNLTGMICDGGKIGCALKLATATNAALMCAYLAMSDVALQPSDGICDVTAEQVIRNMGQVSNPGMVETDQTILSIMIEKDQRK</sequence>
<evidence type="ECO:0000255" key="1">
    <source>
        <dbReference type="HAMAP-Rule" id="MF_01845"/>
    </source>
</evidence>
<organism>
    <name type="scientific">Clostridium botulinum (strain ATCC 19397 / Type A)</name>
    <dbReference type="NCBI Taxonomy" id="441770"/>
    <lineage>
        <taxon>Bacteria</taxon>
        <taxon>Bacillati</taxon>
        <taxon>Bacillota</taxon>
        <taxon>Clostridia</taxon>
        <taxon>Eubacteriales</taxon>
        <taxon>Clostridiaceae</taxon>
        <taxon>Clostridium</taxon>
    </lineage>
</organism>
<dbReference type="EMBL" id="CP000726">
    <property type="protein sequence ID" value="ABS35262.1"/>
    <property type="molecule type" value="Genomic_DNA"/>
</dbReference>
<dbReference type="RefSeq" id="WP_011986501.1">
    <property type="nucleotide sequence ID" value="NC_009697.1"/>
</dbReference>
<dbReference type="KEGG" id="cba:CLB_1903"/>
<dbReference type="HOGENOM" id="CLU_051840_0_0_9"/>
<dbReference type="GO" id="GO:0080146">
    <property type="term" value="F:L-cysteine desulfhydrase activity"/>
    <property type="evidence" value="ECO:0007669"/>
    <property type="project" value="TreeGrafter"/>
</dbReference>
<dbReference type="GO" id="GO:0019450">
    <property type="term" value="P:L-cysteine catabolic process to pyruvate"/>
    <property type="evidence" value="ECO:0007669"/>
    <property type="project" value="TreeGrafter"/>
</dbReference>
<dbReference type="HAMAP" id="MF_01845">
    <property type="entry name" value="UPF0597"/>
    <property type="match status" value="1"/>
</dbReference>
<dbReference type="InterPro" id="IPR005130">
    <property type="entry name" value="Ser_deHydtase-like_asu"/>
</dbReference>
<dbReference type="InterPro" id="IPR021144">
    <property type="entry name" value="UPF0597"/>
</dbReference>
<dbReference type="PANTHER" id="PTHR30501">
    <property type="entry name" value="UPF0597 PROTEIN YHAM"/>
    <property type="match status" value="1"/>
</dbReference>
<dbReference type="PANTHER" id="PTHR30501:SF2">
    <property type="entry name" value="UPF0597 PROTEIN YHAM"/>
    <property type="match status" value="1"/>
</dbReference>
<dbReference type="Pfam" id="PF03313">
    <property type="entry name" value="SDH_alpha"/>
    <property type="match status" value="1"/>
</dbReference>
<dbReference type="PIRSF" id="PIRSF006054">
    <property type="entry name" value="UCP006054"/>
    <property type="match status" value="1"/>
</dbReference>
<proteinExistence type="inferred from homology"/>
<comment type="similarity">
    <text evidence="1">Belongs to the UPF0597 family.</text>
</comment>